<comment type="function">
    <text evidence="3">Transcriptional regulator involved in the positive regulation of the expression of the gene cluster that mediates the biosynthesis of asperlin, a polyketide showing anti-inflammatory, antitumor and antibiotic activities.</text>
</comment>
<comment type="subcellular location">
    <subcellularLocation>
        <location evidence="1">Nucleus</location>
    </subcellularLocation>
</comment>
<comment type="disruption phenotype">
    <text evidence="3">Strongly diminishes the production of asperlin.</text>
</comment>
<comment type="sequence caution" evidence="5">
    <conflict type="erroneous gene model prediction">
        <sequence resource="EMBL-CDS" id="CBF82293"/>
    </conflict>
    <text>The predicted gene AN9221 has been split into 2 genes: alnG and alnR.</text>
</comment>
<comment type="sequence caution" evidence="5">
    <conflict type="erroneous gene model prediction">
        <sequence resource="EMBL-CDS" id="EAA61512"/>
    </conflict>
    <text>The predicted gene AN9221 has been split into 2 genes: alnG and alnR.</text>
</comment>
<name>ALNR_EMENI</name>
<feature type="chain" id="PRO_0000445946" description="Transcriptional regulator alnR">
    <location>
        <begin position="1"/>
        <end position="407"/>
    </location>
</feature>
<feature type="DNA-binding region" description="Zn(2)-C6 fungal-type" evidence="1">
    <location>
        <begin position="23"/>
        <end position="53"/>
    </location>
</feature>
<feature type="region of interest" description="Disordered" evidence="2">
    <location>
        <begin position="53"/>
        <end position="85"/>
    </location>
</feature>
<feature type="compositionally biased region" description="Polar residues" evidence="2">
    <location>
        <begin position="75"/>
        <end position="85"/>
    </location>
</feature>
<protein>
    <recommendedName>
        <fullName evidence="4">Transcriptional regulator alnR</fullName>
    </recommendedName>
    <alternativeName>
        <fullName evidence="4">Asperlin biosynthesis cluster protein R</fullName>
    </alternativeName>
</protein>
<organism>
    <name type="scientific">Emericella nidulans (strain FGSC A4 / ATCC 38163 / CBS 112.46 / NRRL 194 / M139)</name>
    <name type="common">Aspergillus nidulans</name>
    <dbReference type="NCBI Taxonomy" id="227321"/>
    <lineage>
        <taxon>Eukaryota</taxon>
        <taxon>Fungi</taxon>
        <taxon>Dikarya</taxon>
        <taxon>Ascomycota</taxon>
        <taxon>Pezizomycotina</taxon>
        <taxon>Eurotiomycetes</taxon>
        <taxon>Eurotiomycetidae</taxon>
        <taxon>Eurotiales</taxon>
        <taxon>Aspergillaceae</taxon>
        <taxon>Aspergillus</taxon>
        <taxon>Aspergillus subgen. Nidulantes</taxon>
    </lineage>
</organism>
<keyword id="KW-0238">DNA-binding</keyword>
<keyword id="KW-0479">Metal-binding</keyword>
<keyword id="KW-0539">Nucleus</keyword>
<keyword id="KW-1185">Reference proteome</keyword>
<keyword id="KW-0804">Transcription</keyword>
<keyword id="KW-0805">Transcription regulation</keyword>
<keyword id="KW-0862">Zinc</keyword>
<proteinExistence type="inferred from homology"/>
<accession>P0CU78</accession>
<accession>A0A1U8QXS7</accession>
<accession>C8VJR1</accession>
<accession>Q5AR59</accession>
<dbReference type="EMBL" id="AACD01000170">
    <property type="protein sequence ID" value="EAA61512.1"/>
    <property type="status" value="ALT_SEQ"/>
    <property type="molecule type" value="Genomic_DNA"/>
</dbReference>
<dbReference type="EMBL" id="BN001306">
    <property type="protein sequence ID" value="CBF82293.1"/>
    <property type="status" value="ALT_SEQ"/>
    <property type="molecule type" value="Genomic_DNA"/>
</dbReference>
<dbReference type="RefSeq" id="XP_682490.1">
    <property type="nucleotide sequence ID" value="XM_677398.1"/>
</dbReference>
<dbReference type="SMR" id="P0CU78"/>
<dbReference type="KEGG" id="ani:ANIA_09221"/>
<dbReference type="InParanoid" id="P0CU78"/>
<dbReference type="OrthoDB" id="5069333at2759"/>
<dbReference type="Proteomes" id="UP000000560">
    <property type="component" value="Chromosome VI"/>
</dbReference>
<dbReference type="GO" id="GO:0005634">
    <property type="term" value="C:nucleus"/>
    <property type="evidence" value="ECO:0007669"/>
    <property type="project" value="UniProtKB-SubCell"/>
</dbReference>
<dbReference type="GO" id="GO:0003677">
    <property type="term" value="F:DNA binding"/>
    <property type="evidence" value="ECO:0007669"/>
    <property type="project" value="UniProtKB-KW"/>
</dbReference>
<dbReference type="GO" id="GO:0000981">
    <property type="term" value="F:DNA-binding transcription factor activity, RNA polymerase II-specific"/>
    <property type="evidence" value="ECO:0007669"/>
    <property type="project" value="InterPro"/>
</dbReference>
<dbReference type="GO" id="GO:0008270">
    <property type="term" value="F:zinc ion binding"/>
    <property type="evidence" value="ECO:0007669"/>
    <property type="project" value="InterPro"/>
</dbReference>
<dbReference type="CDD" id="cd00067">
    <property type="entry name" value="GAL4"/>
    <property type="match status" value="1"/>
</dbReference>
<dbReference type="Gene3D" id="4.10.240.10">
    <property type="entry name" value="Zn(2)-C6 fungal-type DNA-binding domain"/>
    <property type="match status" value="1"/>
</dbReference>
<dbReference type="InterPro" id="IPR050675">
    <property type="entry name" value="OAF3"/>
</dbReference>
<dbReference type="InterPro" id="IPR036864">
    <property type="entry name" value="Zn2-C6_fun-type_DNA-bd_sf"/>
</dbReference>
<dbReference type="InterPro" id="IPR001138">
    <property type="entry name" value="Zn2Cys6_DnaBD"/>
</dbReference>
<dbReference type="PANTHER" id="PTHR31069">
    <property type="entry name" value="OLEATE-ACTIVATED TRANSCRIPTION FACTOR 1-RELATED"/>
    <property type="match status" value="1"/>
</dbReference>
<dbReference type="PANTHER" id="PTHR31069:SF27">
    <property type="entry name" value="TRANSCRIPTIONAL REGULATOR ALNR"/>
    <property type="match status" value="1"/>
</dbReference>
<dbReference type="Pfam" id="PF00172">
    <property type="entry name" value="Zn_clus"/>
    <property type="match status" value="1"/>
</dbReference>
<dbReference type="PRINTS" id="PR00755">
    <property type="entry name" value="AFLATOXINBRP"/>
</dbReference>
<dbReference type="SMART" id="SM00066">
    <property type="entry name" value="GAL4"/>
    <property type="match status" value="1"/>
</dbReference>
<dbReference type="SUPFAM" id="SSF57701">
    <property type="entry name" value="Zn2/Cys6 DNA-binding domain"/>
    <property type="match status" value="1"/>
</dbReference>
<dbReference type="PROSITE" id="PS50048">
    <property type="entry name" value="ZN2_CY6_FUNGAL_2"/>
    <property type="match status" value="1"/>
</dbReference>
<evidence type="ECO:0000255" key="1">
    <source>
        <dbReference type="PROSITE-ProRule" id="PRU00227"/>
    </source>
</evidence>
<evidence type="ECO:0000256" key="2">
    <source>
        <dbReference type="SAM" id="MobiDB-lite"/>
    </source>
</evidence>
<evidence type="ECO:0000269" key="3">
    <source>
    </source>
</evidence>
<evidence type="ECO:0000303" key="4">
    <source>
    </source>
</evidence>
<evidence type="ECO:0000305" key="5">
    <source>
    </source>
</evidence>
<sequence length="407" mass="45078">MSTVNQSSTRSELAGNWERLRKSCDTCQEAKVKCSQHKPSCHRCLRHRQPCVYSPQRRSGRPPKRPSPSSRLGPESNNSGDDIHNENTIQRTNLNANDSAMTDAGAVDPRVLTGDFAASTGIDPVDDIFQTSFESFLAASLSPKGGLLPGSHSNPTTPNGFSMNSPSITDPFGAFPFLITDHNLPIAALSSHVPPIDQLPVLSTGASNTSSECGDCGAKCYSSLLQHLLFLRQTLPESTRPSIDVIMQAEGHVRALLDRVLGCNACLGNRSSILLISAITERIVQMLDWIIEEKTLLDTENMRYNRRTFSSWGRPPRLPPHGLNGMRRNVCHVSLRVGNTELDEDAKQYFLKNFILLRLKKLAVKVQEVRRTATTRPGDCIYRAAELVLADSIQRLDYLRGQCQLWE</sequence>
<reference key="1">
    <citation type="journal article" date="2005" name="Nature">
        <title>Sequencing of Aspergillus nidulans and comparative analysis with A. fumigatus and A. oryzae.</title>
        <authorList>
            <person name="Galagan J.E."/>
            <person name="Calvo S.E."/>
            <person name="Cuomo C."/>
            <person name="Ma L.-J."/>
            <person name="Wortman J.R."/>
            <person name="Batzoglou S."/>
            <person name="Lee S.-I."/>
            <person name="Bastuerkmen M."/>
            <person name="Spevak C.C."/>
            <person name="Clutterbuck J."/>
            <person name="Kapitonov V."/>
            <person name="Jurka J."/>
            <person name="Scazzocchio C."/>
            <person name="Farman M.L."/>
            <person name="Butler J."/>
            <person name="Purcell S."/>
            <person name="Harris S."/>
            <person name="Braus G.H."/>
            <person name="Draht O."/>
            <person name="Busch S."/>
            <person name="D'Enfert C."/>
            <person name="Bouchier C."/>
            <person name="Goldman G.H."/>
            <person name="Bell-Pedersen D."/>
            <person name="Griffiths-Jones S."/>
            <person name="Doonan J.H."/>
            <person name="Yu J."/>
            <person name="Vienken K."/>
            <person name="Pain A."/>
            <person name="Freitag M."/>
            <person name="Selker E.U."/>
            <person name="Archer D.B."/>
            <person name="Penalva M.A."/>
            <person name="Oakley B.R."/>
            <person name="Momany M."/>
            <person name="Tanaka T."/>
            <person name="Kumagai T."/>
            <person name="Asai K."/>
            <person name="Machida M."/>
            <person name="Nierman W.C."/>
            <person name="Denning D.W."/>
            <person name="Caddick M.X."/>
            <person name="Hynes M."/>
            <person name="Paoletti M."/>
            <person name="Fischer R."/>
            <person name="Miller B.L."/>
            <person name="Dyer P.S."/>
            <person name="Sachs M.S."/>
            <person name="Osmani S.A."/>
            <person name="Birren B.W."/>
        </authorList>
    </citation>
    <scope>NUCLEOTIDE SEQUENCE [LARGE SCALE GENOMIC DNA]</scope>
    <source>
        <strain>FGSC A4 / ATCC 38163 / CBS 112.46 / NRRL 194 / M139</strain>
    </source>
</reference>
<reference key="2">
    <citation type="journal article" date="2009" name="Fungal Genet. Biol.">
        <title>The 2008 update of the Aspergillus nidulans genome annotation: a community effort.</title>
        <authorList>
            <person name="Wortman J.R."/>
            <person name="Gilsenan J.M."/>
            <person name="Joardar V."/>
            <person name="Deegan J."/>
            <person name="Clutterbuck J."/>
            <person name="Andersen M.R."/>
            <person name="Archer D."/>
            <person name="Bencina M."/>
            <person name="Braus G."/>
            <person name="Coutinho P."/>
            <person name="von Dohren H."/>
            <person name="Doonan J."/>
            <person name="Driessen A.J."/>
            <person name="Durek P."/>
            <person name="Espeso E."/>
            <person name="Fekete E."/>
            <person name="Flipphi M."/>
            <person name="Estrada C.G."/>
            <person name="Geysens S."/>
            <person name="Goldman G."/>
            <person name="de Groot P.W."/>
            <person name="Hansen K."/>
            <person name="Harris S.D."/>
            <person name="Heinekamp T."/>
            <person name="Helmstaedt K."/>
            <person name="Henrissat B."/>
            <person name="Hofmann G."/>
            <person name="Homan T."/>
            <person name="Horio T."/>
            <person name="Horiuchi H."/>
            <person name="James S."/>
            <person name="Jones M."/>
            <person name="Karaffa L."/>
            <person name="Karanyi Z."/>
            <person name="Kato M."/>
            <person name="Keller N."/>
            <person name="Kelly D.E."/>
            <person name="Kiel J.A."/>
            <person name="Kim J.M."/>
            <person name="van der Klei I.J."/>
            <person name="Klis F.M."/>
            <person name="Kovalchuk A."/>
            <person name="Krasevec N."/>
            <person name="Kubicek C.P."/>
            <person name="Liu B."/>
            <person name="Maccabe A."/>
            <person name="Meyer V."/>
            <person name="Mirabito P."/>
            <person name="Miskei M."/>
            <person name="Mos M."/>
            <person name="Mullins J."/>
            <person name="Nelson D.R."/>
            <person name="Nielsen J."/>
            <person name="Oakley B.R."/>
            <person name="Osmani S.A."/>
            <person name="Pakula T."/>
            <person name="Paszewski A."/>
            <person name="Paulsen I."/>
            <person name="Pilsyk S."/>
            <person name="Pocsi I."/>
            <person name="Punt P.J."/>
            <person name="Ram A.F."/>
            <person name="Ren Q."/>
            <person name="Robellet X."/>
            <person name="Robson G."/>
            <person name="Seiboth B."/>
            <person name="van Solingen P."/>
            <person name="Specht T."/>
            <person name="Sun J."/>
            <person name="Taheri-Talesh N."/>
            <person name="Takeshita N."/>
            <person name="Ussery D."/>
            <person name="vanKuyk P.A."/>
            <person name="Visser H."/>
            <person name="van de Vondervoort P.J."/>
            <person name="de Vries R.P."/>
            <person name="Walton J."/>
            <person name="Xiang X."/>
            <person name="Xiong Y."/>
            <person name="Zeng A.P."/>
            <person name="Brandt B.W."/>
            <person name="Cornell M.J."/>
            <person name="van den Hondel C.A."/>
            <person name="Visser J."/>
            <person name="Oliver S.G."/>
            <person name="Turner G."/>
        </authorList>
    </citation>
    <scope>GENOME REANNOTATION</scope>
    <source>
        <strain>FGSC A4 / ATCC 38163 / CBS 112.46 / NRRL 194 / M139</strain>
    </source>
</reference>
<reference key="3">
    <citation type="journal article" date="2018" name="ACS Chem. Biol.">
        <title>Hybrid transcription factor engineering activates the silent secondary metabolite gene cluster for (+)-asperlin in Aspergillus nidulans.</title>
        <authorList>
            <person name="Grau M.F."/>
            <person name="Entwistle R."/>
            <person name="Chiang Y.M."/>
            <person name="Ahuja M."/>
            <person name="Oakley C.E."/>
            <person name="Akashi T."/>
            <person name="Wang C.C.C."/>
            <person name="Todd R.B."/>
            <person name="Oakley B.R."/>
        </authorList>
    </citation>
    <scope>GENE MODEL REVISION</scope>
    <scope>IDENTIFICATION</scope>
    <scope>DISRUPTION PHENOTYPE</scope>
    <scope>FUNCTION</scope>
</reference>
<gene>
    <name evidence="4" type="primary">alnR</name>
    <name type="ORF">AN9221</name>
</gene>